<keyword id="KW-0325">Glycoprotein</keyword>
<keyword id="KW-0378">Hydrolase</keyword>
<keyword id="KW-0442">Lipid degradation</keyword>
<keyword id="KW-0443">Lipid metabolism</keyword>
<keyword id="KW-1185">Reference proteome</keyword>
<keyword id="KW-0964">Secreted</keyword>
<keyword id="KW-0732">Signal</keyword>
<reference key="1">
    <citation type="journal article" date="1997" name="DNA Res.">
        <title>Structural analysis of Arabidopsis thaliana chromosome 5. I. Sequence features of the 1.6 Mb regions covered by twenty physically assigned P1 clones.</title>
        <authorList>
            <person name="Sato S."/>
            <person name="Kotani H."/>
            <person name="Nakamura Y."/>
            <person name="Kaneko T."/>
            <person name="Asamizu E."/>
            <person name="Fukami M."/>
            <person name="Miyajima N."/>
            <person name="Tabata S."/>
        </authorList>
    </citation>
    <scope>NUCLEOTIDE SEQUENCE [LARGE SCALE GENOMIC DNA]</scope>
    <source>
        <strain>cv. Columbia</strain>
    </source>
</reference>
<reference key="2">
    <citation type="journal article" date="2017" name="Plant J.">
        <title>Araport11: a complete reannotation of the Arabidopsis thaliana reference genome.</title>
        <authorList>
            <person name="Cheng C.Y."/>
            <person name="Krishnakumar V."/>
            <person name="Chan A.P."/>
            <person name="Thibaud-Nissen F."/>
            <person name="Schobel S."/>
            <person name="Town C.D."/>
        </authorList>
    </citation>
    <scope>GENOME REANNOTATION</scope>
    <source>
        <strain>cv. Columbia</strain>
    </source>
</reference>
<reference key="3">
    <citation type="journal article" date="2004" name="Prog. Lipid Res.">
        <title>GDSL family of serine esterases/lipases.</title>
        <authorList>
            <person name="Akoh C.C."/>
            <person name="Lee G.-C."/>
            <person name="Liaw Y.-C."/>
            <person name="Huang T.-H."/>
            <person name="Shaw J.-F."/>
        </authorList>
    </citation>
    <scope>REVIEW</scope>
</reference>
<reference key="4">
    <citation type="journal article" date="2008" name="Pak. J. Biol. Sci.">
        <title>Sequence analysis of GDSL lipase gene family in Arabidopsis thaliana.</title>
        <authorList>
            <person name="Ling H."/>
        </authorList>
    </citation>
    <scope>GENE FAMILY</scope>
</reference>
<dbReference type="EC" id="3.1.1.-"/>
<dbReference type="EMBL" id="AB005243">
    <property type="protein sequence ID" value="BAB10602.1"/>
    <property type="status" value="ALT_INIT"/>
    <property type="molecule type" value="Genomic_DNA"/>
</dbReference>
<dbReference type="EMBL" id="CP002688">
    <property type="status" value="NOT_ANNOTATED_CDS"/>
    <property type="molecule type" value="Genomic_DNA"/>
</dbReference>
<dbReference type="SMR" id="Q9FFC6"/>
<dbReference type="FunCoup" id="Q9FFC6">
    <property type="interactions" value="102"/>
</dbReference>
<dbReference type="GlyGen" id="Q9FFC6">
    <property type="glycosylation" value="4 sites"/>
</dbReference>
<dbReference type="PaxDb" id="3702-AT5G22810.1"/>
<dbReference type="ProteomicsDB" id="247109"/>
<dbReference type="Araport" id="AT5G22810"/>
<dbReference type="TAIR" id="AT5G22810"/>
<dbReference type="eggNOG" id="KOG0017">
    <property type="taxonomic scope" value="Eukaryota"/>
</dbReference>
<dbReference type="HOGENOM" id="CLU_015101_0_1_1"/>
<dbReference type="InParanoid" id="Q9FFC6"/>
<dbReference type="BioCyc" id="ARA:AT5G22810-MONOMER"/>
<dbReference type="PRO" id="PR:Q9FFC6"/>
<dbReference type="Proteomes" id="UP000006548">
    <property type="component" value="Chromosome 5"/>
</dbReference>
<dbReference type="ExpressionAtlas" id="Q9FFC6">
    <property type="expression patterns" value="baseline and differential"/>
</dbReference>
<dbReference type="GO" id="GO:0005576">
    <property type="term" value="C:extracellular region"/>
    <property type="evidence" value="ECO:0007669"/>
    <property type="project" value="UniProtKB-SubCell"/>
</dbReference>
<dbReference type="GO" id="GO:0016788">
    <property type="term" value="F:hydrolase activity, acting on ester bonds"/>
    <property type="evidence" value="ECO:0007669"/>
    <property type="project" value="InterPro"/>
</dbReference>
<dbReference type="GO" id="GO:0016042">
    <property type="term" value="P:lipid catabolic process"/>
    <property type="evidence" value="ECO:0007669"/>
    <property type="project" value="UniProtKB-KW"/>
</dbReference>
<dbReference type="CDD" id="cd01837">
    <property type="entry name" value="SGNH_plant_lipase_like"/>
    <property type="match status" value="1"/>
</dbReference>
<dbReference type="FunFam" id="3.40.50.1110:FF:000003">
    <property type="entry name" value="GDSL esterase/lipase APG"/>
    <property type="match status" value="1"/>
</dbReference>
<dbReference type="Gene3D" id="3.40.50.1110">
    <property type="entry name" value="SGNH hydrolase"/>
    <property type="match status" value="1"/>
</dbReference>
<dbReference type="InterPro" id="IPR001087">
    <property type="entry name" value="GDSL"/>
</dbReference>
<dbReference type="InterPro" id="IPR050592">
    <property type="entry name" value="GDSL_lipolytic_enzyme"/>
</dbReference>
<dbReference type="InterPro" id="IPR036514">
    <property type="entry name" value="SGNH_hydro_sf"/>
</dbReference>
<dbReference type="InterPro" id="IPR035669">
    <property type="entry name" value="SGNH_plant_lipase-like"/>
</dbReference>
<dbReference type="PANTHER" id="PTHR45642">
    <property type="entry name" value="GDSL ESTERASE/LIPASE EXL3"/>
    <property type="match status" value="1"/>
</dbReference>
<dbReference type="PANTHER" id="PTHR45642:SF67">
    <property type="entry name" value="GDSL-LIKE LIPASE_ACYLHYDROLASE FAMILY PROTEIN, EXPRESSED"/>
    <property type="match status" value="1"/>
</dbReference>
<dbReference type="Pfam" id="PF00657">
    <property type="entry name" value="Lipase_GDSL"/>
    <property type="match status" value="1"/>
</dbReference>
<dbReference type="SUPFAM" id="SSF52266">
    <property type="entry name" value="SGNH hydrolase"/>
    <property type="match status" value="1"/>
</dbReference>
<feature type="signal peptide" evidence="2">
    <location>
        <begin position="1"/>
        <end position="28"/>
    </location>
</feature>
<feature type="chain" id="PRO_0000367418" description="GDSL esterase/lipase At5g22810">
    <location>
        <begin position="29"/>
        <end position="362"/>
    </location>
</feature>
<feature type="active site" description="Nucleophile" evidence="1">
    <location>
        <position position="44"/>
    </location>
</feature>
<feature type="active site" evidence="1">
    <location>
        <position position="337"/>
    </location>
</feature>
<feature type="active site" evidence="1">
    <location>
        <position position="340"/>
    </location>
</feature>
<feature type="glycosylation site" description="N-linked (GlcNAc...) asparagine" evidence="2">
    <location>
        <position position="159"/>
    </location>
</feature>
<feature type="glycosylation site" description="N-linked (GlcNAc...) asparagine" evidence="2">
    <location>
        <position position="162"/>
    </location>
</feature>
<feature type="glycosylation site" description="N-linked (GlcNAc...) asparagine" evidence="2">
    <location>
        <position position="264"/>
    </location>
</feature>
<feature type="glycosylation site" description="N-linked (GlcNAc...) asparagine" evidence="2">
    <location>
        <position position="329"/>
    </location>
</feature>
<evidence type="ECO:0000250" key="1"/>
<evidence type="ECO:0000255" key="2"/>
<evidence type="ECO:0000305" key="3"/>
<comment type="subcellular location">
    <subcellularLocation>
        <location evidence="3">Secreted</location>
    </subcellularLocation>
</comment>
<comment type="similarity">
    <text evidence="3">Belongs to the 'GDSL' lipolytic enzyme family.</text>
</comment>
<comment type="sequence caution" evidence="3">
    <conflict type="erroneous initiation">
        <sequence resource="EMBL-CDS" id="BAB10602"/>
    </conflict>
    <text>Truncated N-terminus.</text>
</comment>
<protein>
    <recommendedName>
        <fullName>GDSL esterase/lipase At5g22810</fullName>
        <ecNumber>3.1.1.-</ecNumber>
    </recommendedName>
    <alternativeName>
        <fullName>Extracellular lipase At5g22810</fullName>
    </alternativeName>
</protein>
<sequence>MGFSGIWLNLYVVFGSLMVFERMVVMVVMKAQPLVPAIFIFGDSVVDVGNNNDIYTIVKANFPPYGRDFTTHTPTGRFCNGKLATDFTAENLGFKSYPQAYLSKKAKGKNLLIGANFASAASGYYDGTAKLYSAISLPQQLEHYKDYISRIQEIATSNNNSNASAIISNGIYIVSAGSSDFIQNYYINPLLYRDQSPDEFSDLLILSYSSFIQNLYSLGARRIGVTTLPPLGCLPAAITVVGPHEGGCSEKLNNDAISFNNKLNTTSQDLKRNLIGLNLVVFDIYQPLYDLATRPSEFGFAEARRACCGTGLLETSILCNPKSVGTCNNATEYVFWDGFHPTEAANKILADNLLVSGISLIS</sequence>
<accession>Q9FFC6</accession>
<accession>F4KBC2</accession>
<name>GDL78_ARATH</name>
<organism>
    <name type="scientific">Arabidopsis thaliana</name>
    <name type="common">Mouse-ear cress</name>
    <dbReference type="NCBI Taxonomy" id="3702"/>
    <lineage>
        <taxon>Eukaryota</taxon>
        <taxon>Viridiplantae</taxon>
        <taxon>Streptophyta</taxon>
        <taxon>Embryophyta</taxon>
        <taxon>Tracheophyta</taxon>
        <taxon>Spermatophyta</taxon>
        <taxon>Magnoliopsida</taxon>
        <taxon>eudicotyledons</taxon>
        <taxon>Gunneridae</taxon>
        <taxon>Pentapetalae</taxon>
        <taxon>rosids</taxon>
        <taxon>malvids</taxon>
        <taxon>Brassicales</taxon>
        <taxon>Brassicaceae</taxon>
        <taxon>Camelineae</taxon>
        <taxon>Arabidopsis</taxon>
    </lineage>
</organism>
<proteinExistence type="inferred from homology"/>
<gene>
    <name type="ordered locus">At5g22810</name>
    <name type="ORF">MRN17.4</name>
</gene>